<accession>A3M1G3</accession>
<keyword id="KW-0240">DNA-directed RNA polymerase</keyword>
<keyword id="KW-0548">Nucleotidyltransferase</keyword>
<keyword id="KW-0804">Transcription</keyword>
<keyword id="KW-0808">Transferase</keyword>
<gene>
    <name evidence="1" type="primary">rpoB</name>
    <name type="ordered locus">A1S_0287</name>
</gene>
<reference key="1">
    <citation type="journal article" date="2007" name="Genes Dev.">
        <title>New insights into Acinetobacter baumannii pathogenesis revealed by high-density pyrosequencing and transposon mutagenesis.</title>
        <authorList>
            <person name="Smith M.G."/>
            <person name="Gianoulis T.A."/>
            <person name="Pukatzki S."/>
            <person name="Mekalanos J.J."/>
            <person name="Ornston L.N."/>
            <person name="Gerstein M."/>
            <person name="Snyder M."/>
        </authorList>
    </citation>
    <scope>NUCLEOTIDE SEQUENCE [LARGE SCALE GENOMIC DNA]</scope>
    <source>
        <strain>ATCC 17978 / DSM 105126 / CIP 53.77 / LMG 1025 / NCDC KC755 / 5377</strain>
    </source>
</reference>
<evidence type="ECO:0000255" key="1">
    <source>
        <dbReference type="HAMAP-Rule" id="MF_01321"/>
    </source>
</evidence>
<organism>
    <name type="scientific">Acinetobacter baumannii (strain ATCC 17978 / DSM 105126 / CIP 53.77 / LMG 1025 / NCDC KC755 / 5377)</name>
    <dbReference type="NCBI Taxonomy" id="400667"/>
    <lineage>
        <taxon>Bacteria</taxon>
        <taxon>Pseudomonadati</taxon>
        <taxon>Pseudomonadota</taxon>
        <taxon>Gammaproteobacteria</taxon>
        <taxon>Moraxellales</taxon>
        <taxon>Moraxellaceae</taxon>
        <taxon>Acinetobacter</taxon>
        <taxon>Acinetobacter calcoaceticus/baumannii complex</taxon>
    </lineage>
</organism>
<name>RPOB_ACIBT</name>
<comment type="function">
    <text evidence="1">DNA-dependent RNA polymerase catalyzes the transcription of DNA into RNA using the four ribonucleoside triphosphates as substrates.</text>
</comment>
<comment type="catalytic activity">
    <reaction evidence="1">
        <text>RNA(n) + a ribonucleoside 5'-triphosphate = RNA(n+1) + diphosphate</text>
        <dbReference type="Rhea" id="RHEA:21248"/>
        <dbReference type="Rhea" id="RHEA-COMP:14527"/>
        <dbReference type="Rhea" id="RHEA-COMP:17342"/>
        <dbReference type="ChEBI" id="CHEBI:33019"/>
        <dbReference type="ChEBI" id="CHEBI:61557"/>
        <dbReference type="ChEBI" id="CHEBI:140395"/>
        <dbReference type="EC" id="2.7.7.6"/>
    </reaction>
</comment>
<comment type="subunit">
    <text evidence="1">The RNAP catalytic core consists of 2 alpha, 1 beta, 1 beta' and 1 omega subunit. When a sigma factor is associated with the core the holoenzyme is formed, which can initiate transcription.</text>
</comment>
<comment type="similarity">
    <text evidence="1">Belongs to the RNA polymerase beta chain family.</text>
</comment>
<proteinExistence type="inferred from homology"/>
<sequence length="1357" mass="151324">MAYSYTEKKRIRKNFGKLPQVMDAPYLLSIQVDSYRTFLQDGKSPKNREDIGLQAAFRSVFPIESYSGNAALEFVEYSLGKPEFDVRECILRGSTYAAPMRVKIRLIIKDRETKSIKDVREQEVYMGEIPLMTENGTFVINGTERVIVSQLHRSPGVFFDHDKGKTHSSGKVLYSARIIPYRGSWLDFEFDAKDLVYVRIDRRRKLLATVVLRALGYNNEQILNLFYEKVPVYLDMGSYQIDLVPERLRGEMAQFDITDNEGKVIVEQGKRINARHVRQMEAAGLTKLSVPDEYLYERITAEDITLRDGEVIAANTLLSHEVMVKLAEGGVKQFNILFTNDIDRGSFVADTLRADLTRDREEALVEIYKVMRPGEPPTKEAAENLFNNLFFSSERYDLSPVGRMKFNRRLGRPYEVGTDQKSREVEGILSHEDIIDVLRTLVEIRNGKGEVDDIDHLGNRRVRSVGEMTENQFRVGLVRVERAVKERLSQAETDNLSPQDLINAKPVAAAIKEFFGSSQLSQFMDQNNPLSEITHKRRVSALGPGGLTRERAGFEVRDVHQTHYGRVCPIETPEGPNIGLINSLSVYAKANDFGFLETPYRKVIDGRVTDDVEYLSAIEEVGTVIAQADSAVDKDGNLTEEFVSVRHQGEFVRMPPEKVTHMDVSAQQVVSVAASLIPFLEHDDANRALMGSNMQRQAVPTLRADKPLVGTGMEANVARDSGVCVIANRGGVIEYVDASRIVIRVNEDEMVAGEAGVDIYNLIKYTRSNQNTCINQNVIVNLGDKVARGDILADGPSTDMGELALGQNMRVAFMTWNGYNYEDSILLSERVLQEDRLTSIHIQELSCVARDTKLGAEEITADIPNVGEAALSKLDESGIVYIGAEVTAGDILVGKVTPKGETQLTPEEKLLRAIFGEKAADVKDSSLRVPSGTKGTVIDVQVFTRDGLEKDDRALAIEKAQLDSYRKDLKEEYKIFEEAARERVIRLLKGQESNGGGSTKRGDKLSEDLLSGLELVDLLEIQPADEAIAERLTQIQVFLKEKSAEIDEKFAEKKRKLATGDELTTGVLKVVKVYLAVKRRIQPGDKMAGRHGNKGVVSNILPVEDMPHDANGVPVDIVLNPLGVPSRMNVGQILETHLGMAAKGLGDKIEKMLKEQRTVLELREFLDKIYNKVGGEQEDLDSLTDEEILALAGNLRAGVPLATPVFDGAEESQIKDLLELADISRTGQTVLFDGRTGEQFDRPVTVGYMYMLKLNHLVDDKMHARSTGSYSLVTQQPLGGKAQFGGQRFGEMEVWALEAYGAAYTLQEMLTVKSDDVEGRTRIYKNIVDGNHYMDPGMPESFNVLTKEIRSLGINID</sequence>
<feature type="chain" id="PRO_0000300271" description="DNA-directed RNA polymerase subunit beta">
    <location>
        <begin position="1"/>
        <end position="1357"/>
    </location>
</feature>
<protein>
    <recommendedName>
        <fullName evidence="1">DNA-directed RNA polymerase subunit beta</fullName>
        <shortName evidence="1">RNAP subunit beta</shortName>
        <ecNumber evidence="1">2.7.7.6</ecNumber>
    </recommendedName>
    <alternativeName>
        <fullName evidence="1">RNA polymerase subunit beta</fullName>
    </alternativeName>
    <alternativeName>
        <fullName evidence="1">Transcriptase subunit beta</fullName>
    </alternativeName>
</protein>
<dbReference type="EC" id="2.7.7.6" evidence="1"/>
<dbReference type="EMBL" id="CP000521">
    <property type="protein sequence ID" value="ABO10757.2"/>
    <property type="molecule type" value="Genomic_DNA"/>
</dbReference>
<dbReference type="SMR" id="A3M1G3"/>
<dbReference type="KEGG" id="acb:A1S_0287"/>
<dbReference type="HOGENOM" id="CLU_000524_4_0_6"/>
<dbReference type="PHI-base" id="PHI:7860"/>
<dbReference type="GO" id="GO:0000428">
    <property type="term" value="C:DNA-directed RNA polymerase complex"/>
    <property type="evidence" value="ECO:0007669"/>
    <property type="project" value="UniProtKB-KW"/>
</dbReference>
<dbReference type="GO" id="GO:0003677">
    <property type="term" value="F:DNA binding"/>
    <property type="evidence" value="ECO:0007669"/>
    <property type="project" value="UniProtKB-UniRule"/>
</dbReference>
<dbReference type="GO" id="GO:0003899">
    <property type="term" value="F:DNA-directed RNA polymerase activity"/>
    <property type="evidence" value="ECO:0007669"/>
    <property type="project" value="UniProtKB-UniRule"/>
</dbReference>
<dbReference type="GO" id="GO:0032549">
    <property type="term" value="F:ribonucleoside binding"/>
    <property type="evidence" value="ECO:0007669"/>
    <property type="project" value="InterPro"/>
</dbReference>
<dbReference type="GO" id="GO:0006351">
    <property type="term" value="P:DNA-templated transcription"/>
    <property type="evidence" value="ECO:0007669"/>
    <property type="project" value="UniProtKB-UniRule"/>
</dbReference>
<dbReference type="CDD" id="cd00653">
    <property type="entry name" value="RNA_pol_B_RPB2"/>
    <property type="match status" value="1"/>
</dbReference>
<dbReference type="FunFam" id="2.40.50.100:FF:000006">
    <property type="entry name" value="DNA-directed RNA polymerase subunit beta"/>
    <property type="match status" value="1"/>
</dbReference>
<dbReference type="FunFam" id="2.40.50.150:FF:000001">
    <property type="entry name" value="DNA-directed RNA polymerase subunit beta"/>
    <property type="match status" value="1"/>
</dbReference>
<dbReference type="FunFam" id="3.90.1110.10:FF:000001">
    <property type="entry name" value="DNA-directed RNA polymerase subunit beta"/>
    <property type="match status" value="1"/>
</dbReference>
<dbReference type="FunFam" id="3.90.1800.10:FF:000001">
    <property type="entry name" value="DNA-directed RNA polymerase subunit beta"/>
    <property type="match status" value="1"/>
</dbReference>
<dbReference type="Gene3D" id="2.40.50.100">
    <property type="match status" value="1"/>
</dbReference>
<dbReference type="Gene3D" id="2.40.50.150">
    <property type="match status" value="1"/>
</dbReference>
<dbReference type="Gene3D" id="3.90.1100.10">
    <property type="match status" value="2"/>
</dbReference>
<dbReference type="Gene3D" id="2.30.150.10">
    <property type="entry name" value="DNA-directed RNA polymerase, beta subunit, external 1 domain"/>
    <property type="match status" value="1"/>
</dbReference>
<dbReference type="Gene3D" id="2.40.270.10">
    <property type="entry name" value="DNA-directed RNA polymerase, subunit 2, domain 6"/>
    <property type="match status" value="1"/>
</dbReference>
<dbReference type="Gene3D" id="3.90.1800.10">
    <property type="entry name" value="RNA polymerase alpha subunit dimerisation domain"/>
    <property type="match status" value="1"/>
</dbReference>
<dbReference type="Gene3D" id="3.90.1110.10">
    <property type="entry name" value="RNA polymerase Rpb2, domain 2"/>
    <property type="match status" value="1"/>
</dbReference>
<dbReference type="HAMAP" id="MF_01321">
    <property type="entry name" value="RNApol_bact_RpoB"/>
    <property type="match status" value="1"/>
</dbReference>
<dbReference type="InterPro" id="IPR042107">
    <property type="entry name" value="DNA-dir_RNA_pol_bsu_ext_1_sf"/>
</dbReference>
<dbReference type="InterPro" id="IPR019462">
    <property type="entry name" value="DNA-dir_RNA_pol_bsu_external_1"/>
</dbReference>
<dbReference type="InterPro" id="IPR015712">
    <property type="entry name" value="DNA-dir_RNA_pol_su2"/>
</dbReference>
<dbReference type="InterPro" id="IPR007120">
    <property type="entry name" value="DNA-dir_RNAP_su2_dom"/>
</dbReference>
<dbReference type="InterPro" id="IPR037033">
    <property type="entry name" value="DNA-dir_RNAP_su2_hyb_sf"/>
</dbReference>
<dbReference type="InterPro" id="IPR010243">
    <property type="entry name" value="RNA_pol_bsu_bac"/>
</dbReference>
<dbReference type="InterPro" id="IPR007121">
    <property type="entry name" value="RNA_pol_bsu_CS"/>
</dbReference>
<dbReference type="InterPro" id="IPR007644">
    <property type="entry name" value="RNA_pol_bsu_protrusion"/>
</dbReference>
<dbReference type="InterPro" id="IPR007642">
    <property type="entry name" value="RNA_pol_Rpb2_2"/>
</dbReference>
<dbReference type="InterPro" id="IPR037034">
    <property type="entry name" value="RNA_pol_Rpb2_2_sf"/>
</dbReference>
<dbReference type="InterPro" id="IPR007645">
    <property type="entry name" value="RNA_pol_Rpb2_3"/>
</dbReference>
<dbReference type="InterPro" id="IPR007641">
    <property type="entry name" value="RNA_pol_Rpb2_7"/>
</dbReference>
<dbReference type="InterPro" id="IPR014724">
    <property type="entry name" value="RNA_pol_RPB2_OB-fold"/>
</dbReference>
<dbReference type="NCBIfam" id="NF001616">
    <property type="entry name" value="PRK00405.1"/>
    <property type="match status" value="1"/>
</dbReference>
<dbReference type="NCBIfam" id="TIGR02013">
    <property type="entry name" value="rpoB"/>
    <property type="match status" value="1"/>
</dbReference>
<dbReference type="PANTHER" id="PTHR20856">
    <property type="entry name" value="DNA-DIRECTED RNA POLYMERASE I SUBUNIT 2"/>
    <property type="match status" value="1"/>
</dbReference>
<dbReference type="Pfam" id="PF04563">
    <property type="entry name" value="RNA_pol_Rpb2_1"/>
    <property type="match status" value="1"/>
</dbReference>
<dbReference type="Pfam" id="PF04561">
    <property type="entry name" value="RNA_pol_Rpb2_2"/>
    <property type="match status" value="2"/>
</dbReference>
<dbReference type="Pfam" id="PF04565">
    <property type="entry name" value="RNA_pol_Rpb2_3"/>
    <property type="match status" value="1"/>
</dbReference>
<dbReference type="Pfam" id="PF10385">
    <property type="entry name" value="RNA_pol_Rpb2_45"/>
    <property type="match status" value="1"/>
</dbReference>
<dbReference type="Pfam" id="PF00562">
    <property type="entry name" value="RNA_pol_Rpb2_6"/>
    <property type="match status" value="1"/>
</dbReference>
<dbReference type="Pfam" id="PF04560">
    <property type="entry name" value="RNA_pol_Rpb2_7"/>
    <property type="match status" value="1"/>
</dbReference>
<dbReference type="SUPFAM" id="SSF64484">
    <property type="entry name" value="beta and beta-prime subunits of DNA dependent RNA-polymerase"/>
    <property type="match status" value="1"/>
</dbReference>
<dbReference type="PROSITE" id="PS01166">
    <property type="entry name" value="RNA_POL_BETA"/>
    <property type="match status" value="1"/>
</dbReference>